<comment type="function">
    <text evidence="1">Produces ATP from ADP in the presence of a proton gradient across the membrane. The gamma chain is believed to be important in regulating ATPase activity and the flow of protons through the CF(0) complex.</text>
</comment>
<comment type="subunit">
    <text evidence="1">F-type ATPases have 2 components, CF(1) - the catalytic core - and CF(0) - the membrane proton channel. CF(1) has five subunits: alpha(3), beta(3), gamma(1), delta(1), epsilon(1). CF(0) has three main subunits: a, b and c.</text>
</comment>
<comment type="subcellular location">
    <subcellularLocation>
        <location evidence="1">Cell inner membrane</location>
        <topology evidence="1">Peripheral membrane protein</topology>
    </subcellularLocation>
</comment>
<comment type="similarity">
    <text evidence="1">Belongs to the ATPase gamma chain family.</text>
</comment>
<protein>
    <recommendedName>
        <fullName evidence="1">ATP synthase gamma chain</fullName>
    </recommendedName>
    <alternativeName>
        <fullName evidence="1">ATP synthase F1 sector gamma subunit</fullName>
    </alternativeName>
    <alternativeName>
        <fullName evidence="1">F-ATPase gamma subunit</fullName>
    </alternativeName>
</protein>
<evidence type="ECO:0000255" key="1">
    <source>
        <dbReference type="HAMAP-Rule" id="MF_00815"/>
    </source>
</evidence>
<sequence length="291" mass="31934">MASLKDMRVRIASTKATQKITKAMQMVAASKLRRAQMAAEAARPYAEKMEAVISNIAGAAAGSPGAPVLLAGNGKDQVHLLLVCTGERGLSGAFNSSIVRLARERAYELMSQGKTVKFFCVGRKGYEQLRRNFEKQIIDNVELRSVRQIGFVNAEDIAKKVIARFNAGEFDVCTLFYSRFKSVISQIPTAQQLIPLEVTAPAAGTVATSYEYEPEEDEILSGLLPRNLAVQIFRALLENNASFYGAQMSAMDNATRNAGEMIRKQTLVYNRTRQAMITKELIEIISGAEAI</sequence>
<accession>B3Q746</accession>
<keyword id="KW-0066">ATP synthesis</keyword>
<keyword id="KW-0997">Cell inner membrane</keyword>
<keyword id="KW-1003">Cell membrane</keyword>
<keyword id="KW-0139">CF(1)</keyword>
<keyword id="KW-0375">Hydrogen ion transport</keyword>
<keyword id="KW-0406">Ion transport</keyword>
<keyword id="KW-0472">Membrane</keyword>
<keyword id="KW-0813">Transport</keyword>
<organism>
    <name type="scientific">Rhodopseudomonas palustris (strain TIE-1)</name>
    <dbReference type="NCBI Taxonomy" id="395960"/>
    <lineage>
        <taxon>Bacteria</taxon>
        <taxon>Pseudomonadati</taxon>
        <taxon>Pseudomonadota</taxon>
        <taxon>Alphaproteobacteria</taxon>
        <taxon>Hyphomicrobiales</taxon>
        <taxon>Nitrobacteraceae</taxon>
        <taxon>Rhodopseudomonas</taxon>
    </lineage>
</organism>
<reference key="1">
    <citation type="submission" date="2008-05" db="EMBL/GenBank/DDBJ databases">
        <title>Complete sequence of Rhodopseudomonas palustris TIE-1.</title>
        <authorList>
            <consortium name="US DOE Joint Genome Institute"/>
            <person name="Lucas S."/>
            <person name="Copeland A."/>
            <person name="Lapidus A."/>
            <person name="Glavina del Rio T."/>
            <person name="Dalin E."/>
            <person name="Tice H."/>
            <person name="Pitluck S."/>
            <person name="Chain P."/>
            <person name="Malfatti S."/>
            <person name="Shin M."/>
            <person name="Vergez L."/>
            <person name="Lang D."/>
            <person name="Schmutz J."/>
            <person name="Larimer F."/>
            <person name="Land M."/>
            <person name="Hauser L."/>
            <person name="Kyrpides N."/>
            <person name="Mikhailova N."/>
            <person name="Emerson D."/>
            <person name="Newman D.K."/>
            <person name="Roden E."/>
            <person name="Richardson P."/>
        </authorList>
    </citation>
    <scope>NUCLEOTIDE SEQUENCE [LARGE SCALE GENOMIC DNA]</scope>
    <source>
        <strain>TIE-1</strain>
    </source>
</reference>
<dbReference type="EMBL" id="CP001096">
    <property type="protein sequence ID" value="ACE98734.1"/>
    <property type="molecule type" value="Genomic_DNA"/>
</dbReference>
<dbReference type="RefSeq" id="WP_011155745.1">
    <property type="nucleotide sequence ID" value="NC_011004.1"/>
</dbReference>
<dbReference type="SMR" id="B3Q746"/>
<dbReference type="KEGG" id="rpt:Rpal_0172"/>
<dbReference type="HOGENOM" id="CLU_050669_0_1_5"/>
<dbReference type="OrthoDB" id="9812769at2"/>
<dbReference type="Proteomes" id="UP000001725">
    <property type="component" value="Chromosome"/>
</dbReference>
<dbReference type="GO" id="GO:0005886">
    <property type="term" value="C:plasma membrane"/>
    <property type="evidence" value="ECO:0007669"/>
    <property type="project" value="UniProtKB-SubCell"/>
</dbReference>
<dbReference type="GO" id="GO:0045259">
    <property type="term" value="C:proton-transporting ATP synthase complex"/>
    <property type="evidence" value="ECO:0007669"/>
    <property type="project" value="UniProtKB-KW"/>
</dbReference>
<dbReference type="GO" id="GO:0005524">
    <property type="term" value="F:ATP binding"/>
    <property type="evidence" value="ECO:0007669"/>
    <property type="project" value="UniProtKB-UniRule"/>
</dbReference>
<dbReference type="GO" id="GO:0046933">
    <property type="term" value="F:proton-transporting ATP synthase activity, rotational mechanism"/>
    <property type="evidence" value="ECO:0007669"/>
    <property type="project" value="UniProtKB-UniRule"/>
</dbReference>
<dbReference type="GO" id="GO:0042777">
    <property type="term" value="P:proton motive force-driven plasma membrane ATP synthesis"/>
    <property type="evidence" value="ECO:0007669"/>
    <property type="project" value="UniProtKB-UniRule"/>
</dbReference>
<dbReference type="CDD" id="cd12151">
    <property type="entry name" value="F1-ATPase_gamma"/>
    <property type="match status" value="1"/>
</dbReference>
<dbReference type="FunFam" id="1.10.287.80:FF:000001">
    <property type="entry name" value="ATP synthase gamma chain"/>
    <property type="match status" value="1"/>
</dbReference>
<dbReference type="Gene3D" id="3.40.1380.10">
    <property type="match status" value="1"/>
</dbReference>
<dbReference type="Gene3D" id="1.10.287.80">
    <property type="entry name" value="ATP synthase, gamma subunit, helix hairpin domain"/>
    <property type="match status" value="1"/>
</dbReference>
<dbReference type="HAMAP" id="MF_00815">
    <property type="entry name" value="ATP_synth_gamma_bact"/>
    <property type="match status" value="1"/>
</dbReference>
<dbReference type="InterPro" id="IPR035968">
    <property type="entry name" value="ATP_synth_F1_ATPase_gsu"/>
</dbReference>
<dbReference type="InterPro" id="IPR000131">
    <property type="entry name" value="ATP_synth_F1_gsu"/>
</dbReference>
<dbReference type="InterPro" id="IPR023632">
    <property type="entry name" value="ATP_synth_F1_gsu_CS"/>
</dbReference>
<dbReference type="NCBIfam" id="TIGR01146">
    <property type="entry name" value="ATPsyn_F1gamma"/>
    <property type="match status" value="1"/>
</dbReference>
<dbReference type="NCBIfam" id="NF004146">
    <property type="entry name" value="PRK05621.1-4"/>
    <property type="match status" value="1"/>
</dbReference>
<dbReference type="PANTHER" id="PTHR11693">
    <property type="entry name" value="ATP SYNTHASE GAMMA CHAIN"/>
    <property type="match status" value="1"/>
</dbReference>
<dbReference type="PANTHER" id="PTHR11693:SF22">
    <property type="entry name" value="ATP SYNTHASE SUBUNIT GAMMA, MITOCHONDRIAL"/>
    <property type="match status" value="1"/>
</dbReference>
<dbReference type="Pfam" id="PF00231">
    <property type="entry name" value="ATP-synt"/>
    <property type="match status" value="1"/>
</dbReference>
<dbReference type="PIRSF" id="PIRSF039089">
    <property type="entry name" value="ATP_synthase_gamma"/>
    <property type="match status" value="1"/>
</dbReference>
<dbReference type="PRINTS" id="PR00126">
    <property type="entry name" value="ATPASEGAMMA"/>
</dbReference>
<dbReference type="SUPFAM" id="SSF52943">
    <property type="entry name" value="ATP synthase (F1-ATPase), gamma subunit"/>
    <property type="match status" value="1"/>
</dbReference>
<dbReference type="PROSITE" id="PS00153">
    <property type="entry name" value="ATPASE_GAMMA"/>
    <property type="match status" value="1"/>
</dbReference>
<name>ATPG_RHOPT</name>
<proteinExistence type="inferred from homology"/>
<gene>
    <name evidence="1" type="primary">atpG</name>
    <name type="ordered locus">Rpal_0172</name>
</gene>
<feature type="chain" id="PRO_1000134197" description="ATP synthase gamma chain">
    <location>
        <begin position="1"/>
        <end position="291"/>
    </location>
</feature>